<organism>
    <name type="scientific">Mesomycoplasma hyopneumoniae (strain J / ATCC 25934 / NCTC 10110)</name>
    <name type="common">Mycoplasma hyopneumoniae</name>
    <dbReference type="NCBI Taxonomy" id="262719"/>
    <lineage>
        <taxon>Bacteria</taxon>
        <taxon>Bacillati</taxon>
        <taxon>Mycoplasmatota</taxon>
        <taxon>Mycoplasmoidales</taxon>
        <taxon>Metamycoplasmataceae</taxon>
        <taxon>Mesomycoplasma</taxon>
    </lineage>
</organism>
<protein>
    <recommendedName>
        <fullName evidence="1">Large ribosomal subunit protein uL3</fullName>
    </recommendedName>
    <alternativeName>
        <fullName evidence="3">50S ribosomal protein L3</fullName>
    </alternativeName>
</protein>
<reference key="1">
    <citation type="journal article" date="2005" name="J. Bacteriol.">
        <title>Swine and poultry pathogens: the complete genome sequences of two strains of Mycoplasma hyopneumoniae and a strain of Mycoplasma synoviae.</title>
        <authorList>
            <person name="Vasconcelos A.T.R."/>
            <person name="Ferreira H.B."/>
            <person name="Bizarro C.V."/>
            <person name="Bonatto S.L."/>
            <person name="Carvalho M.O."/>
            <person name="Pinto P.M."/>
            <person name="Almeida D.F."/>
            <person name="Almeida L.G.P."/>
            <person name="Almeida R."/>
            <person name="Alves-Junior L."/>
            <person name="Assuncao E.N."/>
            <person name="Azevedo V.A.C."/>
            <person name="Bogo M.R."/>
            <person name="Brigido M.M."/>
            <person name="Brocchi M."/>
            <person name="Burity H.A."/>
            <person name="Camargo A.A."/>
            <person name="Camargo S.S."/>
            <person name="Carepo M.S."/>
            <person name="Carraro D.M."/>
            <person name="de Mattos Cascardo J.C."/>
            <person name="Castro L.A."/>
            <person name="Cavalcanti G."/>
            <person name="Chemale G."/>
            <person name="Collevatti R.G."/>
            <person name="Cunha C.W."/>
            <person name="Dallagiovanna B."/>
            <person name="Dambros B.P."/>
            <person name="Dellagostin O.A."/>
            <person name="Falcao C."/>
            <person name="Fantinatti-Garboggini F."/>
            <person name="Felipe M.S.S."/>
            <person name="Fiorentin L."/>
            <person name="Franco G.R."/>
            <person name="Freitas N.S.A."/>
            <person name="Frias D."/>
            <person name="Grangeiro T.B."/>
            <person name="Grisard E.C."/>
            <person name="Guimaraes C.T."/>
            <person name="Hungria M."/>
            <person name="Jardim S.N."/>
            <person name="Krieger M.A."/>
            <person name="Laurino J.P."/>
            <person name="Lima L.F.A."/>
            <person name="Lopes M.I."/>
            <person name="Loreto E.L.S."/>
            <person name="Madeira H.M.F."/>
            <person name="Manfio G.P."/>
            <person name="Maranhao A.Q."/>
            <person name="Martinkovics C.T."/>
            <person name="Medeiros S.R.B."/>
            <person name="Moreira M.A.M."/>
            <person name="Neiva M."/>
            <person name="Ramalho-Neto C.E."/>
            <person name="Nicolas M.F."/>
            <person name="Oliveira S.C."/>
            <person name="Paixao R.F.C."/>
            <person name="Pedrosa F.O."/>
            <person name="Pena S.D.J."/>
            <person name="Pereira M."/>
            <person name="Pereira-Ferrari L."/>
            <person name="Piffer I."/>
            <person name="Pinto L.S."/>
            <person name="Potrich D.P."/>
            <person name="Salim A.C.M."/>
            <person name="Santos F.R."/>
            <person name="Schmitt R."/>
            <person name="Schneider M.P.C."/>
            <person name="Schrank A."/>
            <person name="Schrank I.S."/>
            <person name="Schuck A.F."/>
            <person name="Seuanez H.N."/>
            <person name="Silva D.W."/>
            <person name="Silva R."/>
            <person name="Silva S.C."/>
            <person name="Soares C.M.A."/>
            <person name="Souza K.R.L."/>
            <person name="Souza R.C."/>
            <person name="Staats C.C."/>
            <person name="Steffens M.B.R."/>
            <person name="Teixeira S.M.R."/>
            <person name="Urmenyi T.P."/>
            <person name="Vainstein M.H."/>
            <person name="Zuccherato L.W."/>
            <person name="Simpson A.J.G."/>
            <person name="Zaha A."/>
        </authorList>
    </citation>
    <scope>NUCLEOTIDE SEQUENCE [LARGE SCALE GENOMIC DNA]</scope>
    <source>
        <strain>J / ATCC 25934 / NCTC 10110</strain>
    </source>
</reference>
<evidence type="ECO:0000255" key="1">
    <source>
        <dbReference type="HAMAP-Rule" id="MF_01325"/>
    </source>
</evidence>
<evidence type="ECO:0000256" key="2">
    <source>
        <dbReference type="SAM" id="MobiDB-lite"/>
    </source>
</evidence>
<evidence type="ECO:0000305" key="3"/>
<comment type="function">
    <text evidence="1">One of the primary rRNA binding proteins, it binds directly near the 3'-end of the 23S rRNA, where it nucleates assembly of the 50S subunit.</text>
</comment>
<comment type="subunit">
    <text evidence="1">Part of the 50S ribosomal subunit. Forms a cluster with proteins L14 and L19.</text>
</comment>
<comment type="similarity">
    <text evidence="1">Belongs to the universal ribosomal protein uL3 family.</text>
</comment>
<gene>
    <name evidence="1" type="primary">rplC</name>
    <name type="ordered locus">MHJ_0190</name>
</gene>
<proteinExistence type="inferred from homology"/>
<name>RL3_MESHJ</name>
<dbReference type="EMBL" id="AE017243">
    <property type="protein sequence ID" value="AAZ44281.1"/>
    <property type="molecule type" value="Genomic_DNA"/>
</dbReference>
<dbReference type="RefSeq" id="WP_011283976.1">
    <property type="nucleotide sequence ID" value="NC_007295.1"/>
</dbReference>
<dbReference type="SMR" id="Q4AAE0"/>
<dbReference type="GeneID" id="41334493"/>
<dbReference type="KEGG" id="mhj:MHJ_0190"/>
<dbReference type="eggNOG" id="COG0087">
    <property type="taxonomic scope" value="Bacteria"/>
</dbReference>
<dbReference type="HOGENOM" id="CLU_044142_4_0_14"/>
<dbReference type="OrthoDB" id="9806135at2"/>
<dbReference type="Proteomes" id="UP000000548">
    <property type="component" value="Chromosome"/>
</dbReference>
<dbReference type="GO" id="GO:0022625">
    <property type="term" value="C:cytosolic large ribosomal subunit"/>
    <property type="evidence" value="ECO:0007669"/>
    <property type="project" value="TreeGrafter"/>
</dbReference>
<dbReference type="GO" id="GO:0019843">
    <property type="term" value="F:rRNA binding"/>
    <property type="evidence" value="ECO:0007669"/>
    <property type="project" value="UniProtKB-UniRule"/>
</dbReference>
<dbReference type="GO" id="GO:0003735">
    <property type="term" value="F:structural constituent of ribosome"/>
    <property type="evidence" value="ECO:0007669"/>
    <property type="project" value="InterPro"/>
</dbReference>
<dbReference type="GO" id="GO:0006412">
    <property type="term" value="P:translation"/>
    <property type="evidence" value="ECO:0007669"/>
    <property type="project" value="UniProtKB-UniRule"/>
</dbReference>
<dbReference type="FunFam" id="2.40.30.10:FF:000004">
    <property type="entry name" value="50S ribosomal protein L3"/>
    <property type="match status" value="1"/>
</dbReference>
<dbReference type="Gene3D" id="3.30.160.810">
    <property type="match status" value="1"/>
</dbReference>
<dbReference type="Gene3D" id="2.40.30.10">
    <property type="entry name" value="Translation factors"/>
    <property type="match status" value="1"/>
</dbReference>
<dbReference type="HAMAP" id="MF_01325_B">
    <property type="entry name" value="Ribosomal_uL3_B"/>
    <property type="match status" value="1"/>
</dbReference>
<dbReference type="InterPro" id="IPR000597">
    <property type="entry name" value="Ribosomal_uL3"/>
</dbReference>
<dbReference type="InterPro" id="IPR019927">
    <property type="entry name" value="Ribosomal_uL3_bac/org-type"/>
</dbReference>
<dbReference type="InterPro" id="IPR019926">
    <property type="entry name" value="Ribosomal_uL3_CS"/>
</dbReference>
<dbReference type="InterPro" id="IPR009000">
    <property type="entry name" value="Transl_B-barrel_sf"/>
</dbReference>
<dbReference type="NCBIfam" id="TIGR03625">
    <property type="entry name" value="L3_bact"/>
    <property type="match status" value="1"/>
</dbReference>
<dbReference type="PANTHER" id="PTHR11229">
    <property type="entry name" value="50S RIBOSOMAL PROTEIN L3"/>
    <property type="match status" value="1"/>
</dbReference>
<dbReference type="PANTHER" id="PTHR11229:SF16">
    <property type="entry name" value="LARGE RIBOSOMAL SUBUNIT PROTEIN UL3C"/>
    <property type="match status" value="1"/>
</dbReference>
<dbReference type="Pfam" id="PF00297">
    <property type="entry name" value="Ribosomal_L3"/>
    <property type="match status" value="1"/>
</dbReference>
<dbReference type="SUPFAM" id="SSF50447">
    <property type="entry name" value="Translation proteins"/>
    <property type="match status" value="1"/>
</dbReference>
<dbReference type="PROSITE" id="PS00474">
    <property type="entry name" value="RIBOSOMAL_L3"/>
    <property type="match status" value="1"/>
</dbReference>
<sequence length="230" mass="24978">MKGILGKKVGMSQLFTTEGIAIPVSIIEVPENIVTKIITKEKNSYDAIQLAAFDKKQSRFLKPEIGHFAKANTKPKRFIKEFRDFQGYKLGQTVDVSIFSPGEFVDVTGTSKGKGFAGTIKRYNQAIGPRSHGGGGGSKPIRQTGSLGDISGNKVVKGMTMPGRLGHEKVTKQSLEIIKVDKENNLLVLKGSVPGPKKSFLVIKSAIKKPNPKNPVSLFVPNSDKEVKNE</sequence>
<keyword id="KW-0687">Ribonucleoprotein</keyword>
<keyword id="KW-0689">Ribosomal protein</keyword>
<keyword id="KW-0694">RNA-binding</keyword>
<keyword id="KW-0699">rRNA-binding</keyword>
<feature type="chain" id="PRO_0000241370" description="Large ribosomal subunit protein uL3">
    <location>
        <begin position="1"/>
        <end position="230"/>
    </location>
</feature>
<feature type="region of interest" description="Disordered" evidence="2">
    <location>
        <begin position="125"/>
        <end position="149"/>
    </location>
</feature>
<feature type="region of interest" description="Disordered" evidence="2">
    <location>
        <begin position="210"/>
        <end position="230"/>
    </location>
</feature>
<accession>Q4AAE0</accession>